<proteinExistence type="inferred from homology"/>
<sequence>MAPQAPDREKALELALAQIEKSHGKGSVMRLGDEVRAPISVIPTGSIALDVALGIGGLPRGRVIEIYGPESSGKTTVALHAVANAQAAGGIAAFIDAEHALDPDYAKKLGVDTDSLLVSQPDTGEQALEIADMLIRSGALDILVIDSVAALVPRAEIEGEMGDSHVGLQARLMSQALRKITGALSNSGTTAIFINQLREKIGVMFGSPETTTGGKALKFYASVRMDVRRIETLKDGTDAVGNRTRVKIVKNKVSPPFKQAEFDILYGKGISKEGSLIDMGVEHGFIRKSGSWFTYEGEQLGQGKENARKFLLENGDVANEIEKKIKEKLNIGAVVTADDVLPAPVDF</sequence>
<reference key="1">
    <citation type="submission" date="2007-02" db="EMBL/GenBank/DDBJ databases">
        <title>Complete sequence of Mycobacterium sp. JLS.</title>
        <authorList>
            <consortium name="US DOE Joint Genome Institute"/>
            <person name="Copeland A."/>
            <person name="Lucas S."/>
            <person name="Lapidus A."/>
            <person name="Barry K."/>
            <person name="Detter J.C."/>
            <person name="Glavina del Rio T."/>
            <person name="Hammon N."/>
            <person name="Israni S."/>
            <person name="Dalin E."/>
            <person name="Tice H."/>
            <person name="Pitluck S."/>
            <person name="Chain P."/>
            <person name="Malfatti S."/>
            <person name="Shin M."/>
            <person name="Vergez L."/>
            <person name="Schmutz J."/>
            <person name="Larimer F."/>
            <person name="Land M."/>
            <person name="Hauser L."/>
            <person name="Kyrpides N."/>
            <person name="Mikhailova N."/>
            <person name="Miller C.D."/>
            <person name="Anderson A.J."/>
            <person name="Sims R.C."/>
            <person name="Richardson P."/>
        </authorList>
    </citation>
    <scope>NUCLEOTIDE SEQUENCE [LARGE SCALE GENOMIC DNA]</scope>
    <source>
        <strain>JLS</strain>
    </source>
</reference>
<name>RECA_MYCSJ</name>
<keyword id="KW-0067">ATP-binding</keyword>
<keyword id="KW-0963">Cytoplasm</keyword>
<keyword id="KW-0227">DNA damage</keyword>
<keyword id="KW-0233">DNA recombination</keyword>
<keyword id="KW-0234">DNA repair</keyword>
<keyword id="KW-0238">DNA-binding</keyword>
<keyword id="KW-0547">Nucleotide-binding</keyword>
<keyword id="KW-0742">SOS response</keyword>
<protein>
    <recommendedName>
        <fullName evidence="1">Protein RecA</fullName>
    </recommendedName>
    <alternativeName>
        <fullName evidence="1">Recombinase A</fullName>
    </alternativeName>
</protein>
<feature type="chain" id="PRO_1000078671" description="Protein RecA">
    <location>
        <begin position="1"/>
        <end position="347"/>
    </location>
</feature>
<feature type="binding site" evidence="1">
    <location>
        <begin position="68"/>
        <end position="75"/>
    </location>
    <ligand>
        <name>ATP</name>
        <dbReference type="ChEBI" id="CHEBI:30616"/>
    </ligand>
</feature>
<accession>A3PYE3</accession>
<dbReference type="EMBL" id="CP000580">
    <property type="protein sequence ID" value="ABN97920.1"/>
    <property type="molecule type" value="Genomic_DNA"/>
</dbReference>
<dbReference type="SMR" id="A3PYE3"/>
<dbReference type="KEGG" id="mjl:Mjls_2134"/>
<dbReference type="HOGENOM" id="CLU_040469_1_2_11"/>
<dbReference type="BioCyc" id="MSP164757:G1G8C-2154-MONOMER"/>
<dbReference type="GO" id="GO:0005829">
    <property type="term" value="C:cytosol"/>
    <property type="evidence" value="ECO:0007669"/>
    <property type="project" value="TreeGrafter"/>
</dbReference>
<dbReference type="GO" id="GO:0005524">
    <property type="term" value="F:ATP binding"/>
    <property type="evidence" value="ECO:0007669"/>
    <property type="project" value="UniProtKB-UniRule"/>
</dbReference>
<dbReference type="GO" id="GO:0016887">
    <property type="term" value="F:ATP hydrolysis activity"/>
    <property type="evidence" value="ECO:0007669"/>
    <property type="project" value="InterPro"/>
</dbReference>
<dbReference type="GO" id="GO:0140664">
    <property type="term" value="F:ATP-dependent DNA damage sensor activity"/>
    <property type="evidence" value="ECO:0007669"/>
    <property type="project" value="InterPro"/>
</dbReference>
<dbReference type="GO" id="GO:0003684">
    <property type="term" value="F:damaged DNA binding"/>
    <property type="evidence" value="ECO:0007669"/>
    <property type="project" value="UniProtKB-UniRule"/>
</dbReference>
<dbReference type="GO" id="GO:0003697">
    <property type="term" value="F:single-stranded DNA binding"/>
    <property type="evidence" value="ECO:0007669"/>
    <property type="project" value="UniProtKB-UniRule"/>
</dbReference>
<dbReference type="GO" id="GO:0006310">
    <property type="term" value="P:DNA recombination"/>
    <property type="evidence" value="ECO:0007669"/>
    <property type="project" value="UniProtKB-UniRule"/>
</dbReference>
<dbReference type="GO" id="GO:0006281">
    <property type="term" value="P:DNA repair"/>
    <property type="evidence" value="ECO:0007669"/>
    <property type="project" value="UniProtKB-UniRule"/>
</dbReference>
<dbReference type="GO" id="GO:0009432">
    <property type="term" value="P:SOS response"/>
    <property type="evidence" value="ECO:0007669"/>
    <property type="project" value="UniProtKB-UniRule"/>
</dbReference>
<dbReference type="CDD" id="cd00983">
    <property type="entry name" value="RecA"/>
    <property type="match status" value="1"/>
</dbReference>
<dbReference type="FunFam" id="3.40.50.300:FF:002436">
    <property type="entry name" value="Protein RecA"/>
    <property type="match status" value="1"/>
</dbReference>
<dbReference type="Gene3D" id="3.40.50.300">
    <property type="entry name" value="P-loop containing nucleotide triphosphate hydrolases"/>
    <property type="match status" value="1"/>
</dbReference>
<dbReference type="HAMAP" id="MF_00268">
    <property type="entry name" value="RecA"/>
    <property type="match status" value="1"/>
</dbReference>
<dbReference type="InterPro" id="IPR003593">
    <property type="entry name" value="AAA+_ATPase"/>
</dbReference>
<dbReference type="InterPro" id="IPR013765">
    <property type="entry name" value="DNA_recomb/repair_RecA"/>
</dbReference>
<dbReference type="InterPro" id="IPR020584">
    <property type="entry name" value="DNA_recomb/repair_RecA_CS"/>
</dbReference>
<dbReference type="InterPro" id="IPR027417">
    <property type="entry name" value="P-loop_NTPase"/>
</dbReference>
<dbReference type="InterPro" id="IPR049261">
    <property type="entry name" value="RecA-like_C"/>
</dbReference>
<dbReference type="InterPro" id="IPR049428">
    <property type="entry name" value="RecA-like_N"/>
</dbReference>
<dbReference type="InterPro" id="IPR020588">
    <property type="entry name" value="RecA_ATP-bd"/>
</dbReference>
<dbReference type="InterPro" id="IPR023400">
    <property type="entry name" value="RecA_C_sf"/>
</dbReference>
<dbReference type="InterPro" id="IPR020587">
    <property type="entry name" value="RecA_monomer-monomer_interface"/>
</dbReference>
<dbReference type="NCBIfam" id="TIGR02012">
    <property type="entry name" value="tigrfam_recA"/>
    <property type="match status" value="1"/>
</dbReference>
<dbReference type="PANTHER" id="PTHR45900:SF1">
    <property type="entry name" value="MITOCHONDRIAL DNA REPAIR PROTEIN RECA HOMOLOG-RELATED"/>
    <property type="match status" value="1"/>
</dbReference>
<dbReference type="PANTHER" id="PTHR45900">
    <property type="entry name" value="RECA"/>
    <property type="match status" value="1"/>
</dbReference>
<dbReference type="Pfam" id="PF00154">
    <property type="entry name" value="RecA"/>
    <property type="match status" value="1"/>
</dbReference>
<dbReference type="Pfam" id="PF21096">
    <property type="entry name" value="RecA_C"/>
    <property type="match status" value="1"/>
</dbReference>
<dbReference type="PRINTS" id="PR00142">
    <property type="entry name" value="RECA"/>
</dbReference>
<dbReference type="SMART" id="SM00382">
    <property type="entry name" value="AAA"/>
    <property type="match status" value="1"/>
</dbReference>
<dbReference type="SUPFAM" id="SSF52540">
    <property type="entry name" value="P-loop containing nucleoside triphosphate hydrolases"/>
    <property type="match status" value="1"/>
</dbReference>
<dbReference type="SUPFAM" id="SSF54752">
    <property type="entry name" value="RecA protein, C-terminal domain"/>
    <property type="match status" value="1"/>
</dbReference>
<dbReference type="PROSITE" id="PS00321">
    <property type="entry name" value="RECA_1"/>
    <property type="match status" value="1"/>
</dbReference>
<dbReference type="PROSITE" id="PS50162">
    <property type="entry name" value="RECA_2"/>
    <property type="match status" value="1"/>
</dbReference>
<dbReference type="PROSITE" id="PS50163">
    <property type="entry name" value="RECA_3"/>
    <property type="match status" value="1"/>
</dbReference>
<gene>
    <name evidence="1" type="primary">recA</name>
    <name type="ordered locus">Mjls_2134</name>
</gene>
<evidence type="ECO:0000255" key="1">
    <source>
        <dbReference type="HAMAP-Rule" id="MF_00268"/>
    </source>
</evidence>
<comment type="function">
    <text evidence="1">Can catalyze the hydrolysis of ATP in the presence of single-stranded DNA, the ATP-dependent uptake of single-stranded DNA by duplex DNA, and the ATP-dependent hybridization of homologous single-stranded DNAs. It interacts with LexA causing its activation and leading to its autocatalytic cleavage.</text>
</comment>
<comment type="subcellular location">
    <subcellularLocation>
        <location evidence="1">Cytoplasm</location>
    </subcellularLocation>
</comment>
<comment type="similarity">
    <text evidence="1">Belongs to the RecA family.</text>
</comment>
<organism>
    <name type="scientific">Mycobacterium sp. (strain JLS)</name>
    <dbReference type="NCBI Taxonomy" id="164757"/>
    <lineage>
        <taxon>Bacteria</taxon>
        <taxon>Bacillati</taxon>
        <taxon>Actinomycetota</taxon>
        <taxon>Actinomycetes</taxon>
        <taxon>Mycobacteriales</taxon>
        <taxon>Mycobacteriaceae</taxon>
        <taxon>Mycobacterium</taxon>
    </lineage>
</organism>